<organism>
    <name type="scientific">Vibrio vulnificus (strain YJ016)</name>
    <dbReference type="NCBI Taxonomy" id="196600"/>
    <lineage>
        <taxon>Bacteria</taxon>
        <taxon>Pseudomonadati</taxon>
        <taxon>Pseudomonadota</taxon>
        <taxon>Gammaproteobacteria</taxon>
        <taxon>Vibrionales</taxon>
        <taxon>Vibrionaceae</taxon>
        <taxon>Vibrio</taxon>
    </lineage>
</organism>
<proteinExistence type="inferred from homology"/>
<accession>Q7MEL2</accession>
<name>ACKA2_VIBVY</name>
<evidence type="ECO:0000255" key="1">
    <source>
        <dbReference type="HAMAP-Rule" id="MF_00020"/>
    </source>
</evidence>
<comment type="function">
    <text evidence="1">Catalyzes the formation of acetyl phosphate from acetate and ATP. Can also catalyze the reverse reaction.</text>
</comment>
<comment type="catalytic activity">
    <reaction evidence="1">
        <text>acetate + ATP = acetyl phosphate + ADP</text>
        <dbReference type="Rhea" id="RHEA:11352"/>
        <dbReference type="ChEBI" id="CHEBI:22191"/>
        <dbReference type="ChEBI" id="CHEBI:30089"/>
        <dbReference type="ChEBI" id="CHEBI:30616"/>
        <dbReference type="ChEBI" id="CHEBI:456216"/>
        <dbReference type="EC" id="2.7.2.1"/>
    </reaction>
</comment>
<comment type="cofactor">
    <cofactor evidence="1">
        <name>Mg(2+)</name>
        <dbReference type="ChEBI" id="CHEBI:18420"/>
    </cofactor>
    <cofactor evidence="1">
        <name>Mn(2+)</name>
        <dbReference type="ChEBI" id="CHEBI:29035"/>
    </cofactor>
    <text evidence="1">Mg(2+). Can also accept Mn(2+).</text>
</comment>
<comment type="pathway">
    <text evidence="1">Metabolic intermediate biosynthesis; acetyl-CoA biosynthesis; acetyl-CoA from acetate: step 1/2.</text>
</comment>
<comment type="subunit">
    <text evidence="1">Homodimer.</text>
</comment>
<comment type="subcellular location">
    <subcellularLocation>
        <location evidence="1">Cytoplasm</location>
    </subcellularLocation>
</comment>
<comment type="similarity">
    <text evidence="1">Belongs to the acetokinase family.</text>
</comment>
<keyword id="KW-0067">ATP-binding</keyword>
<keyword id="KW-0963">Cytoplasm</keyword>
<keyword id="KW-0418">Kinase</keyword>
<keyword id="KW-0460">Magnesium</keyword>
<keyword id="KW-0479">Metal-binding</keyword>
<keyword id="KW-0547">Nucleotide-binding</keyword>
<keyword id="KW-0808">Transferase</keyword>
<dbReference type="EC" id="2.7.2.1" evidence="1"/>
<dbReference type="EMBL" id="BA000038">
    <property type="protein sequence ID" value="BAC96684.1"/>
    <property type="molecule type" value="Genomic_DNA"/>
</dbReference>
<dbReference type="RefSeq" id="WP_011081130.1">
    <property type="nucleotide sequence ID" value="NC_005140.1"/>
</dbReference>
<dbReference type="SMR" id="Q7MEL2"/>
<dbReference type="STRING" id="672.VV93_v1c36590"/>
<dbReference type="KEGG" id="vvy:VVA0658"/>
<dbReference type="PATRIC" id="fig|196600.6.peg.3852"/>
<dbReference type="eggNOG" id="COG0282">
    <property type="taxonomic scope" value="Bacteria"/>
</dbReference>
<dbReference type="HOGENOM" id="CLU_020352_0_1_6"/>
<dbReference type="UniPathway" id="UPA00340">
    <property type="reaction ID" value="UER00458"/>
</dbReference>
<dbReference type="Proteomes" id="UP000002675">
    <property type="component" value="Chromosome II"/>
</dbReference>
<dbReference type="GO" id="GO:0005829">
    <property type="term" value="C:cytosol"/>
    <property type="evidence" value="ECO:0007669"/>
    <property type="project" value="TreeGrafter"/>
</dbReference>
<dbReference type="GO" id="GO:0008776">
    <property type="term" value="F:acetate kinase activity"/>
    <property type="evidence" value="ECO:0007669"/>
    <property type="project" value="UniProtKB-UniRule"/>
</dbReference>
<dbReference type="GO" id="GO:0005524">
    <property type="term" value="F:ATP binding"/>
    <property type="evidence" value="ECO:0007669"/>
    <property type="project" value="UniProtKB-KW"/>
</dbReference>
<dbReference type="GO" id="GO:0000287">
    <property type="term" value="F:magnesium ion binding"/>
    <property type="evidence" value="ECO:0007669"/>
    <property type="project" value="UniProtKB-UniRule"/>
</dbReference>
<dbReference type="GO" id="GO:0006083">
    <property type="term" value="P:acetate metabolic process"/>
    <property type="evidence" value="ECO:0007669"/>
    <property type="project" value="TreeGrafter"/>
</dbReference>
<dbReference type="GO" id="GO:0006085">
    <property type="term" value="P:acetyl-CoA biosynthetic process"/>
    <property type="evidence" value="ECO:0007669"/>
    <property type="project" value="UniProtKB-UniRule"/>
</dbReference>
<dbReference type="CDD" id="cd24010">
    <property type="entry name" value="ASKHA_NBD_AcK_PK"/>
    <property type="match status" value="1"/>
</dbReference>
<dbReference type="Gene3D" id="3.30.420.40">
    <property type="match status" value="2"/>
</dbReference>
<dbReference type="HAMAP" id="MF_00020">
    <property type="entry name" value="Acetate_kinase"/>
    <property type="match status" value="1"/>
</dbReference>
<dbReference type="InterPro" id="IPR004372">
    <property type="entry name" value="Ac/propionate_kinase"/>
</dbReference>
<dbReference type="InterPro" id="IPR000890">
    <property type="entry name" value="Aliphatic_acid_kin_short-chain"/>
</dbReference>
<dbReference type="InterPro" id="IPR023865">
    <property type="entry name" value="Aliphatic_acid_kinase_CS"/>
</dbReference>
<dbReference type="InterPro" id="IPR043129">
    <property type="entry name" value="ATPase_NBD"/>
</dbReference>
<dbReference type="NCBIfam" id="TIGR00016">
    <property type="entry name" value="ackA"/>
    <property type="match status" value="1"/>
</dbReference>
<dbReference type="NCBIfam" id="NF009099">
    <property type="entry name" value="PRK12440.1"/>
    <property type="match status" value="1"/>
</dbReference>
<dbReference type="PANTHER" id="PTHR21060">
    <property type="entry name" value="ACETATE KINASE"/>
    <property type="match status" value="1"/>
</dbReference>
<dbReference type="PANTHER" id="PTHR21060:SF21">
    <property type="entry name" value="ACETATE KINASE"/>
    <property type="match status" value="1"/>
</dbReference>
<dbReference type="Pfam" id="PF00871">
    <property type="entry name" value="Acetate_kinase"/>
    <property type="match status" value="1"/>
</dbReference>
<dbReference type="PIRSF" id="PIRSF000722">
    <property type="entry name" value="Acetate_prop_kin"/>
    <property type="match status" value="1"/>
</dbReference>
<dbReference type="PRINTS" id="PR00471">
    <property type="entry name" value="ACETATEKNASE"/>
</dbReference>
<dbReference type="SUPFAM" id="SSF53067">
    <property type="entry name" value="Actin-like ATPase domain"/>
    <property type="match status" value="2"/>
</dbReference>
<dbReference type="PROSITE" id="PS01075">
    <property type="entry name" value="ACETATE_KINASE_1"/>
    <property type="match status" value="1"/>
</dbReference>
<dbReference type="PROSITE" id="PS01076">
    <property type="entry name" value="ACETATE_KINASE_2"/>
    <property type="match status" value="1"/>
</dbReference>
<gene>
    <name evidence="1" type="primary">ackA2</name>
    <name type="ordered locus">VVA0658</name>
</gene>
<sequence>MSNSFVLVINSGSSSLKFAVINSVTGEAVLSGLGECFGLEDARMGWKYSGEKTEIAIEGEDNHHKIAIGKLVGLTEELGLTKDIVAVGHRIVHGGEKFTSTVRINEEVTAEIEKLADLAPLHNPAGAIGIRAAMEAFPALPQFAVFDTAFHQTMPKRAFTGAIANELYTDFGIRRYGFHGTSHYFVSREAAKMLNKPIEESSFISVHLGNGASVCAINNGESVDTSMGFTPLSGLMMGTRCGDLDPGIIEYLLKKGWSQEKVFNSLNKASGFLGVSGLTSDARGILEAMEQGHEGATLAFQVFTYRVAKYIASYLAALDSFDGIIFTGGIGENSLPIRREILKNLKLLGFVEDEKGNEDARFGNAGVIATSALLNAVAMVIPTNEEFVIAQQSVELL</sequence>
<feature type="chain" id="PRO_0000107644" description="Acetate kinase 2">
    <location>
        <begin position="1"/>
        <end position="397"/>
    </location>
</feature>
<feature type="active site" description="Proton donor/acceptor" evidence="1">
    <location>
        <position position="147"/>
    </location>
</feature>
<feature type="binding site" evidence="1">
    <location>
        <position position="10"/>
    </location>
    <ligand>
        <name>Mg(2+)</name>
        <dbReference type="ChEBI" id="CHEBI:18420"/>
    </ligand>
</feature>
<feature type="binding site" evidence="1">
    <location>
        <position position="17"/>
    </location>
    <ligand>
        <name>ATP</name>
        <dbReference type="ChEBI" id="CHEBI:30616"/>
    </ligand>
</feature>
<feature type="binding site" evidence="1">
    <location>
        <position position="90"/>
    </location>
    <ligand>
        <name>substrate</name>
    </ligand>
</feature>
<feature type="binding site" evidence="1">
    <location>
        <begin position="207"/>
        <end position="211"/>
    </location>
    <ligand>
        <name>ATP</name>
        <dbReference type="ChEBI" id="CHEBI:30616"/>
    </ligand>
</feature>
<feature type="binding site" evidence="1">
    <location>
        <begin position="281"/>
        <end position="283"/>
    </location>
    <ligand>
        <name>ATP</name>
        <dbReference type="ChEBI" id="CHEBI:30616"/>
    </ligand>
</feature>
<feature type="binding site" evidence="1">
    <location>
        <begin position="329"/>
        <end position="333"/>
    </location>
    <ligand>
        <name>ATP</name>
        <dbReference type="ChEBI" id="CHEBI:30616"/>
    </ligand>
</feature>
<feature type="binding site" evidence="1">
    <location>
        <position position="385"/>
    </location>
    <ligand>
        <name>Mg(2+)</name>
        <dbReference type="ChEBI" id="CHEBI:18420"/>
    </ligand>
</feature>
<feature type="site" description="Transition state stabilizer" evidence="1">
    <location>
        <position position="179"/>
    </location>
</feature>
<feature type="site" description="Transition state stabilizer" evidence="1">
    <location>
        <position position="240"/>
    </location>
</feature>
<protein>
    <recommendedName>
        <fullName evidence="1">Acetate kinase 2</fullName>
        <ecNumber evidence="1">2.7.2.1</ecNumber>
    </recommendedName>
    <alternativeName>
        <fullName evidence="1">Acetokinase 2</fullName>
    </alternativeName>
</protein>
<reference key="1">
    <citation type="journal article" date="2003" name="Genome Res.">
        <title>Comparative genome analysis of Vibrio vulnificus, a marine pathogen.</title>
        <authorList>
            <person name="Chen C.-Y."/>
            <person name="Wu K.-M."/>
            <person name="Chang Y.-C."/>
            <person name="Chang C.-H."/>
            <person name="Tsai H.-C."/>
            <person name="Liao T.-L."/>
            <person name="Liu Y.-M."/>
            <person name="Chen H.-J."/>
            <person name="Shen A.B.-T."/>
            <person name="Li J.-C."/>
            <person name="Su T.-L."/>
            <person name="Shao C.-P."/>
            <person name="Lee C.-T."/>
            <person name="Hor L.-I."/>
            <person name="Tsai S.-F."/>
        </authorList>
    </citation>
    <scope>NUCLEOTIDE SEQUENCE [LARGE SCALE GENOMIC DNA]</scope>
    <source>
        <strain>YJ016</strain>
    </source>
</reference>